<keyword id="KW-0963">Cytoplasm</keyword>
<keyword id="KW-0539">Nucleus</keyword>
<keyword id="KW-1185">Reference proteome</keyword>
<organism>
    <name type="scientific">Schizosaccharomyces pombe (strain 972 / ATCC 24843)</name>
    <name type="common">Fission yeast</name>
    <dbReference type="NCBI Taxonomy" id="284812"/>
    <lineage>
        <taxon>Eukaryota</taxon>
        <taxon>Fungi</taxon>
        <taxon>Dikarya</taxon>
        <taxon>Ascomycota</taxon>
        <taxon>Taphrinomycotina</taxon>
        <taxon>Schizosaccharomycetes</taxon>
        <taxon>Schizosaccharomycetales</taxon>
        <taxon>Schizosaccharomycetaceae</taxon>
        <taxon>Schizosaccharomyces</taxon>
    </lineage>
</organism>
<protein>
    <recommendedName>
        <fullName>GID complex subunit 8</fullName>
    </recommendedName>
    <alternativeName>
        <fullName>Glucose-induced degradation protein 8</fullName>
    </alternativeName>
</protein>
<evidence type="ECO:0000250" key="1">
    <source>
        <dbReference type="UniProtKB" id="P40208"/>
    </source>
</evidence>
<evidence type="ECO:0000255" key="2">
    <source>
        <dbReference type="PROSITE-ProRule" id="PRU00058"/>
    </source>
</evidence>
<evidence type="ECO:0000255" key="3">
    <source>
        <dbReference type="PROSITE-ProRule" id="PRU00126"/>
    </source>
</evidence>
<evidence type="ECO:0000305" key="4"/>
<evidence type="ECO:0000312" key="5">
    <source>
        <dbReference type="PomBase" id="SPAC12B10.13"/>
    </source>
</evidence>
<name>GID8_SCHPO</name>
<comment type="function">
    <text evidence="1">Component of the GID E3 ligase complex recruiting N termini and catalyzing ubiquitination of proteins targeted for degradation. GID E3 is regulated through assembly with interchangeable N-degron-binding substrate receptors induced by distinct environmental perturbations. Required for the adaptation to the presence of glucose in the growth medium; mediates in association with the substrate receptor VID24/GID4 the degradation of enzymes involved in gluconeogenesis when cells are shifted to glucose-containing medium.</text>
</comment>
<comment type="subunit">
    <text evidence="1">Identified in the GID/CTLH complex. In the absence of stress, the complex exists as an inactive anticipatory complex (GID(Ant)), composed of Gid1, the E3 ubiquitin-ligase Gid2, Gid5, Gid8, and the RING-like subunit Gid9, awaiting a substrate receptor to form the active E3 ligase complex. When cells are shifted to glucose-containing medium, the substrate receptor Gid4 is induced and becomes part of the complex, named GID(SR4). Additionally, Gid7 transforms the GID(SR4) E3 ligase core into a higher-order supramolecular assembly (Chelator-GID(SR4)). Under osmotic or heat stress, the substrate receptor Gid10 is induced and becomes part of the complex, named GID(SR10).</text>
</comment>
<comment type="subcellular location">
    <subcellularLocation>
        <location evidence="1">Nucleus</location>
    </subcellularLocation>
    <subcellularLocation>
        <location evidence="1">Cytoplasm</location>
    </subcellularLocation>
</comment>
<comment type="similarity">
    <text evidence="4">Belongs to the GID8 family.</text>
</comment>
<reference key="1">
    <citation type="journal article" date="2002" name="Nature">
        <title>The genome sequence of Schizosaccharomyces pombe.</title>
        <authorList>
            <person name="Wood V."/>
            <person name="Gwilliam R."/>
            <person name="Rajandream M.A."/>
            <person name="Lyne M.H."/>
            <person name="Lyne R."/>
            <person name="Stewart A."/>
            <person name="Sgouros J.G."/>
            <person name="Peat N."/>
            <person name="Hayles J."/>
            <person name="Baker S.G."/>
            <person name="Basham D."/>
            <person name="Bowman S."/>
            <person name="Brooks K."/>
            <person name="Brown D."/>
            <person name="Brown S."/>
            <person name="Chillingworth T."/>
            <person name="Churcher C.M."/>
            <person name="Collins M."/>
            <person name="Connor R."/>
            <person name="Cronin A."/>
            <person name="Davis P."/>
            <person name="Feltwell T."/>
            <person name="Fraser A."/>
            <person name="Gentles S."/>
            <person name="Goble A."/>
            <person name="Hamlin N."/>
            <person name="Harris D.E."/>
            <person name="Hidalgo J."/>
            <person name="Hodgson G."/>
            <person name="Holroyd S."/>
            <person name="Hornsby T."/>
            <person name="Howarth S."/>
            <person name="Huckle E.J."/>
            <person name="Hunt S."/>
            <person name="Jagels K."/>
            <person name="James K.D."/>
            <person name="Jones L."/>
            <person name="Jones M."/>
            <person name="Leather S."/>
            <person name="McDonald S."/>
            <person name="McLean J."/>
            <person name="Mooney P."/>
            <person name="Moule S."/>
            <person name="Mungall K.L."/>
            <person name="Murphy L.D."/>
            <person name="Niblett D."/>
            <person name="Odell C."/>
            <person name="Oliver K."/>
            <person name="O'Neil S."/>
            <person name="Pearson D."/>
            <person name="Quail M.A."/>
            <person name="Rabbinowitsch E."/>
            <person name="Rutherford K.M."/>
            <person name="Rutter S."/>
            <person name="Saunders D."/>
            <person name="Seeger K."/>
            <person name="Sharp S."/>
            <person name="Skelton J."/>
            <person name="Simmonds M.N."/>
            <person name="Squares R."/>
            <person name="Squares S."/>
            <person name="Stevens K."/>
            <person name="Taylor K."/>
            <person name="Taylor R.G."/>
            <person name="Tivey A."/>
            <person name="Walsh S.V."/>
            <person name="Warren T."/>
            <person name="Whitehead S."/>
            <person name="Woodward J.R."/>
            <person name="Volckaert G."/>
            <person name="Aert R."/>
            <person name="Robben J."/>
            <person name="Grymonprez B."/>
            <person name="Weltjens I."/>
            <person name="Vanstreels E."/>
            <person name="Rieger M."/>
            <person name="Schaefer M."/>
            <person name="Mueller-Auer S."/>
            <person name="Gabel C."/>
            <person name="Fuchs M."/>
            <person name="Duesterhoeft A."/>
            <person name="Fritzc C."/>
            <person name="Holzer E."/>
            <person name="Moestl D."/>
            <person name="Hilbert H."/>
            <person name="Borzym K."/>
            <person name="Langer I."/>
            <person name="Beck A."/>
            <person name="Lehrach H."/>
            <person name="Reinhardt R."/>
            <person name="Pohl T.M."/>
            <person name="Eger P."/>
            <person name="Zimmermann W."/>
            <person name="Wedler H."/>
            <person name="Wambutt R."/>
            <person name="Purnelle B."/>
            <person name="Goffeau A."/>
            <person name="Cadieu E."/>
            <person name="Dreano S."/>
            <person name="Gloux S."/>
            <person name="Lelaure V."/>
            <person name="Mottier S."/>
            <person name="Galibert F."/>
            <person name="Aves S.J."/>
            <person name="Xiang Z."/>
            <person name="Hunt C."/>
            <person name="Moore K."/>
            <person name="Hurst S.M."/>
            <person name="Lucas M."/>
            <person name="Rochet M."/>
            <person name="Gaillardin C."/>
            <person name="Tallada V.A."/>
            <person name="Garzon A."/>
            <person name="Thode G."/>
            <person name="Daga R.R."/>
            <person name="Cruzado L."/>
            <person name="Jimenez J."/>
            <person name="Sanchez M."/>
            <person name="del Rey F."/>
            <person name="Benito J."/>
            <person name="Dominguez A."/>
            <person name="Revuelta J.L."/>
            <person name="Moreno S."/>
            <person name="Armstrong J."/>
            <person name="Forsburg S.L."/>
            <person name="Cerutti L."/>
            <person name="Lowe T."/>
            <person name="McCombie W.R."/>
            <person name="Paulsen I."/>
            <person name="Potashkin J."/>
            <person name="Shpakovski G.V."/>
            <person name="Ussery D."/>
            <person name="Barrell B.G."/>
            <person name="Nurse P."/>
        </authorList>
    </citation>
    <scope>NUCLEOTIDE SEQUENCE [LARGE SCALE GENOMIC DNA]</scope>
    <source>
        <strain>972 / ATCC 24843</strain>
    </source>
</reference>
<sequence length="240" mass="27034">MVGTSSLDISMSGSSSSDAEQWEKQTKSVHIDNSDVNSLILDYLVIQGDEEAAKTFAEEAQITDYYIPPYVKERLEICELIKSGSINSAICKLNELEPEILDTNSELLFELLRLRLLELIREVVEEKDTSDLAVERCLNFAHENLAPLAPSNQKFLNSLELTMSLLCFPPSSYSPALKNVLNYSQRERVANLANVSILKSQGLSNESRLLSLVNFERWCEKEAQRNSIEVQKFVPKASIK</sequence>
<accession>Q10446</accession>
<feature type="chain" id="PRO_0000116613" description="GID complex subunit 8">
    <location>
        <begin position="1"/>
        <end position="240"/>
    </location>
</feature>
<feature type="domain" description="LisH" evidence="3">
    <location>
        <begin position="32"/>
        <end position="64"/>
    </location>
</feature>
<feature type="domain" description="CTLH" evidence="2">
    <location>
        <begin position="70"/>
        <end position="127"/>
    </location>
</feature>
<gene>
    <name type="primary">gid8</name>
    <name evidence="5" type="ORF">SPAC12B10.13</name>
</gene>
<proteinExistence type="inferred from homology"/>
<dbReference type="EMBL" id="CU329670">
    <property type="protein sequence ID" value="CAA94703.1"/>
    <property type="molecule type" value="Genomic_DNA"/>
</dbReference>
<dbReference type="PIR" id="T37580">
    <property type="entry name" value="T37580"/>
</dbReference>
<dbReference type="RefSeq" id="NP_594645.1">
    <property type="nucleotide sequence ID" value="NM_001020073.2"/>
</dbReference>
<dbReference type="SMR" id="Q10446"/>
<dbReference type="BioGRID" id="279446">
    <property type="interactions" value="42"/>
</dbReference>
<dbReference type="FunCoup" id="Q10446">
    <property type="interactions" value="687"/>
</dbReference>
<dbReference type="STRING" id="284812.Q10446"/>
<dbReference type="iPTMnet" id="Q10446"/>
<dbReference type="PaxDb" id="4896-SPAC12B10.13.1"/>
<dbReference type="EnsemblFungi" id="SPAC12B10.13.1">
    <property type="protein sequence ID" value="SPAC12B10.13.1:pep"/>
    <property type="gene ID" value="SPAC12B10.13"/>
</dbReference>
<dbReference type="GeneID" id="2543008"/>
<dbReference type="KEGG" id="spo:2543008"/>
<dbReference type="PomBase" id="SPAC12B10.13">
    <property type="gene designation" value="gid8"/>
</dbReference>
<dbReference type="VEuPathDB" id="FungiDB:SPAC12B10.13"/>
<dbReference type="eggNOG" id="KOG2659">
    <property type="taxonomic scope" value="Eukaryota"/>
</dbReference>
<dbReference type="HOGENOM" id="CLU_073203_0_0_1"/>
<dbReference type="InParanoid" id="Q10446"/>
<dbReference type="OMA" id="KMILWAQ"/>
<dbReference type="PhylomeDB" id="Q10446"/>
<dbReference type="Reactome" id="R-SPO-9861718">
    <property type="pathway name" value="Regulation of pyruvate metabolism"/>
</dbReference>
<dbReference type="PRO" id="PR:Q10446"/>
<dbReference type="Proteomes" id="UP000002485">
    <property type="component" value="Chromosome I"/>
</dbReference>
<dbReference type="GO" id="GO:0005737">
    <property type="term" value="C:cytoplasm"/>
    <property type="evidence" value="ECO:0000318"/>
    <property type="project" value="GO_Central"/>
</dbReference>
<dbReference type="GO" id="GO:0005829">
    <property type="term" value="C:cytosol"/>
    <property type="evidence" value="ECO:0007005"/>
    <property type="project" value="PomBase"/>
</dbReference>
<dbReference type="GO" id="GO:0034657">
    <property type="term" value="C:GID complex"/>
    <property type="evidence" value="ECO:0000266"/>
    <property type="project" value="PomBase"/>
</dbReference>
<dbReference type="GO" id="GO:0005634">
    <property type="term" value="C:nucleus"/>
    <property type="evidence" value="ECO:0007005"/>
    <property type="project" value="PomBase"/>
</dbReference>
<dbReference type="GO" id="GO:0045721">
    <property type="term" value="P:negative regulation of gluconeogenesis"/>
    <property type="evidence" value="ECO:0000266"/>
    <property type="project" value="PomBase"/>
</dbReference>
<dbReference type="GO" id="GO:0043161">
    <property type="term" value="P:proteasome-mediated ubiquitin-dependent protein catabolic process"/>
    <property type="evidence" value="ECO:0000318"/>
    <property type="project" value="GO_Central"/>
</dbReference>
<dbReference type="InterPro" id="IPR013144">
    <property type="entry name" value="CRA_dom"/>
</dbReference>
<dbReference type="InterPro" id="IPR024964">
    <property type="entry name" value="CTLH/CRA"/>
</dbReference>
<dbReference type="InterPro" id="IPR006595">
    <property type="entry name" value="CTLH_C"/>
</dbReference>
<dbReference type="InterPro" id="IPR006594">
    <property type="entry name" value="LisH"/>
</dbReference>
<dbReference type="InterPro" id="IPR050618">
    <property type="entry name" value="Ubq-SigPath_Reg"/>
</dbReference>
<dbReference type="PANTHER" id="PTHR12864">
    <property type="entry name" value="RAN BINDING PROTEIN 9-RELATED"/>
    <property type="match status" value="1"/>
</dbReference>
<dbReference type="Pfam" id="PF10607">
    <property type="entry name" value="CTLH"/>
    <property type="match status" value="1"/>
</dbReference>
<dbReference type="Pfam" id="PF08513">
    <property type="entry name" value="LisH"/>
    <property type="match status" value="1"/>
</dbReference>
<dbReference type="SMART" id="SM00757">
    <property type="entry name" value="CRA"/>
    <property type="match status" value="1"/>
</dbReference>
<dbReference type="SMART" id="SM00668">
    <property type="entry name" value="CTLH"/>
    <property type="match status" value="1"/>
</dbReference>
<dbReference type="SMART" id="SM00667">
    <property type="entry name" value="LisH"/>
    <property type="match status" value="1"/>
</dbReference>
<dbReference type="PROSITE" id="PS50897">
    <property type="entry name" value="CTLH"/>
    <property type="match status" value="1"/>
</dbReference>
<dbReference type="PROSITE" id="PS50896">
    <property type="entry name" value="LISH"/>
    <property type="match status" value="1"/>
</dbReference>